<organism>
    <name type="scientific">Canine adenovirus serotype 1 (strain RI261)</name>
    <name type="common">CAdV-1</name>
    <name type="synonym">Canine adenovirus 1 (strain RI261)</name>
    <dbReference type="NCBI Taxonomy" id="69151"/>
    <lineage>
        <taxon>Viruses</taxon>
        <taxon>Varidnaviria</taxon>
        <taxon>Bamfordvirae</taxon>
        <taxon>Preplasmiviricota</taxon>
        <taxon>Tectiliviricetes</taxon>
        <taxon>Rowavirales</taxon>
        <taxon>Adenoviridae</taxon>
        <taxon>Mastadenovirus</taxon>
        <taxon>Canine mastadenovirus A</taxon>
    </lineage>
</organism>
<feature type="propeptide" id="PRO_0000036534" evidence="2">
    <location>
        <begin position="1"/>
        <end position="21"/>
    </location>
</feature>
<feature type="peptide" id="PRO_0000036535" description="Late L2 mu core protein">
    <location>
        <begin position="22"/>
        <end position="39"/>
    </location>
</feature>
<feature type="propeptide" id="PRO_0000036536" evidence="2">
    <location>
        <begin position="40"/>
        <end position="68"/>
    </location>
</feature>
<feature type="site" description="Cleavage; by adenovirus protease" evidence="2">
    <location>
        <begin position="21"/>
        <end position="22"/>
    </location>
</feature>
<feature type="site" description="Cleavage; by adenovirus protease" evidence="2">
    <location>
        <begin position="39"/>
        <end position="40"/>
    </location>
</feature>
<organismHost>
    <name type="scientific">Canis lupus familiaris</name>
    <name type="common">Dog</name>
    <name type="synonym">Canis familiaris</name>
    <dbReference type="NCBI Taxonomy" id="9615"/>
</organismHost>
<comment type="function">
    <text evidence="1">The role of the precursor might be to condense the viral prochromatin for encapsidation by virtue of the two basic domains.</text>
</comment>
<comment type="subcellular location">
    <subcellularLocation>
        <location evidence="3">Virion</location>
    </subcellularLocation>
</comment>
<comment type="similarity">
    <text evidence="3">Belongs to the adenoviridae pX family.</text>
</comment>
<dbReference type="EMBL" id="Y07760">
    <property type="protein sequence ID" value="CAA69064.1"/>
    <property type="molecule type" value="Genomic_DNA"/>
</dbReference>
<dbReference type="RefSeq" id="AP_000057.1">
    <property type="nucleotide sequence ID" value="AC_000003.1"/>
</dbReference>
<dbReference type="KEGG" id="vg:1488929"/>
<dbReference type="Proteomes" id="UP000126130">
    <property type="component" value="Segment"/>
</dbReference>
<dbReference type="GO" id="GO:0019013">
    <property type="term" value="C:viral nucleocapsid"/>
    <property type="evidence" value="ECO:0007669"/>
    <property type="project" value="InterPro"/>
</dbReference>
<dbReference type="GO" id="GO:0003677">
    <property type="term" value="F:DNA binding"/>
    <property type="evidence" value="ECO:0007669"/>
    <property type="project" value="UniProtKB-KW"/>
</dbReference>
<dbReference type="InterPro" id="IPR008393">
    <property type="entry name" value="Adenovirus_late_L2_mu_core"/>
</dbReference>
<dbReference type="Pfam" id="PF05829">
    <property type="entry name" value="Adeno_PX"/>
    <property type="match status" value="1"/>
</dbReference>
<evidence type="ECO:0000250" key="1"/>
<evidence type="ECO:0000255" key="2"/>
<evidence type="ECO:0000305" key="3"/>
<reference key="1">
    <citation type="journal article" date="1997" name="J. Gen. Virol.">
        <title>Complete DNA sequence of canine adenovirus type 1.</title>
        <authorList>
            <person name="Morrison M.D."/>
            <person name="Onions D.E."/>
            <person name="Nicolson L."/>
        </authorList>
    </citation>
    <scope>NUCLEOTIDE SEQUENCE [LARGE SCALE GENOMIC DNA]</scope>
</reference>
<gene>
    <name type="primary">PX</name>
</gene>
<sequence>MAGRNVTLRLRVPVRTKITGAGRRRGRRTRIRCGRMKGGFLPALIPLIAAAIGAVPGIASVALQAARH</sequence>
<protein>
    <recommendedName>
        <fullName>Late L2 mu core protein</fullName>
    </recommendedName>
    <alternativeName>
        <fullName>Protein X</fullName>
        <shortName>pX</shortName>
    </alternativeName>
    <alternativeName>
        <fullName>pMu</fullName>
    </alternativeName>
</protein>
<name>L2MU_ADECR</name>
<keyword id="KW-0238">DNA-binding</keyword>
<keyword id="KW-0426">Late protein</keyword>
<keyword id="KW-0946">Virion</keyword>
<proteinExistence type="inferred from homology"/>
<accession>P68975</accession>
<accession>Q65953</accession>